<sequence>MEKDALEVRLKSIRHSLDKNTKLLPGKYRNTLGERLITKWRYKKKSHNGSSMLPEKCKSHVQLYDDLVQESSKHFVGFRLHDLRALLKRICSIQNYTRHVLIEWDVRWVNPLTLASKGWEPYQSASQSQVPFKCCCCHAIMTIPLLKNGDDVADYTMKLNEKIWNSNIIGNHLQKCPWRENQVDLNKEYYLSSQNLIREIERIHTEIDRIVSGSNEFSLKRNSSRIFHYLSEKEIQKLAFFFDCKDYSLVGLLLLGYTKFQKDDLVQCTACFHRASLKKLEYTEFNGHALWCRYYNKELLPTMLLELIGKEDKLITKLGVGERLNKLEAVLQTL</sequence>
<dbReference type="EMBL" id="Z49210">
    <property type="protein sequence ID" value="CAA89111.1"/>
    <property type="status" value="ALT_INIT"/>
    <property type="molecule type" value="Genomic_DNA"/>
</dbReference>
<dbReference type="EMBL" id="BK006946">
    <property type="protein sequence ID" value="DAA09791.1"/>
    <property type="molecule type" value="Genomic_DNA"/>
</dbReference>
<dbReference type="PIR" id="S53965">
    <property type="entry name" value="S53965"/>
</dbReference>
<dbReference type="RefSeq" id="NP_013600.2">
    <property type="nucleotide sequence ID" value="NM_001182469.1"/>
</dbReference>
<dbReference type="PDB" id="7RDN">
    <property type="method" value="X-ray"/>
    <property type="resolution" value="2.49 A"/>
    <property type="chains" value="A=77-317"/>
</dbReference>
<dbReference type="PDBsum" id="7RDN"/>
<dbReference type="SMR" id="Q03760"/>
<dbReference type="BioGRID" id="35036">
    <property type="interactions" value="254"/>
</dbReference>
<dbReference type="DIP" id="DIP-4523N"/>
<dbReference type="FunCoup" id="Q03760">
    <property type="interactions" value="53"/>
</dbReference>
<dbReference type="IntAct" id="Q03760">
    <property type="interactions" value="69"/>
</dbReference>
<dbReference type="MINT" id="Q03760"/>
<dbReference type="STRING" id="4932.YML107C"/>
<dbReference type="PaxDb" id="4932-YML107C"/>
<dbReference type="PeptideAtlas" id="Q03760"/>
<dbReference type="EnsemblFungi" id="YML107C_mRNA">
    <property type="protein sequence ID" value="YML107C"/>
    <property type="gene ID" value="YML107C"/>
</dbReference>
<dbReference type="GeneID" id="854864"/>
<dbReference type="KEGG" id="sce:YML107C"/>
<dbReference type="AGR" id="SGD:S000004575"/>
<dbReference type="SGD" id="S000004575">
    <property type="gene designation" value="PML39"/>
</dbReference>
<dbReference type="VEuPathDB" id="FungiDB:YML107C"/>
<dbReference type="eggNOG" id="ENOG502S4N7">
    <property type="taxonomic scope" value="Eukaryota"/>
</dbReference>
<dbReference type="HOGENOM" id="CLU_831968_0_0_1"/>
<dbReference type="InParanoid" id="Q03760"/>
<dbReference type="OMA" id="CHAIMTI"/>
<dbReference type="OrthoDB" id="4068218at2759"/>
<dbReference type="BioCyc" id="YEAST:G3O-32690-MONOMER"/>
<dbReference type="BioGRID-ORCS" id="854864">
    <property type="hits" value="1 hit in 10 CRISPR screens"/>
</dbReference>
<dbReference type="PRO" id="PR:Q03760"/>
<dbReference type="Proteomes" id="UP000002311">
    <property type="component" value="Chromosome XIII"/>
</dbReference>
<dbReference type="RNAct" id="Q03760">
    <property type="molecule type" value="protein"/>
</dbReference>
<dbReference type="GO" id="GO:0031965">
    <property type="term" value="C:nuclear membrane"/>
    <property type="evidence" value="ECO:0000314"/>
    <property type="project" value="SGD"/>
</dbReference>
<dbReference type="GO" id="GO:0044615">
    <property type="term" value="C:nuclear pore nuclear basket"/>
    <property type="evidence" value="ECO:0000314"/>
    <property type="project" value="SGD"/>
</dbReference>
<dbReference type="GO" id="GO:0008270">
    <property type="term" value="F:zinc ion binding"/>
    <property type="evidence" value="ECO:0007669"/>
    <property type="project" value="InterPro"/>
</dbReference>
<dbReference type="GO" id="GO:0051237">
    <property type="term" value="P:maintenance of RNA location"/>
    <property type="evidence" value="ECO:0000315"/>
    <property type="project" value="SGD"/>
</dbReference>
<dbReference type="GO" id="GO:0051028">
    <property type="term" value="P:mRNA transport"/>
    <property type="evidence" value="ECO:0007669"/>
    <property type="project" value="UniProtKB-KW"/>
</dbReference>
<dbReference type="InterPro" id="IPR012935">
    <property type="entry name" value="NuBaID_N"/>
</dbReference>
<dbReference type="Pfam" id="PF07967">
    <property type="entry name" value="zf-C3HC"/>
    <property type="match status" value="1"/>
</dbReference>
<organism>
    <name type="scientific">Saccharomyces cerevisiae (strain ATCC 204508 / S288c)</name>
    <name type="common">Baker's yeast</name>
    <dbReference type="NCBI Taxonomy" id="559292"/>
    <lineage>
        <taxon>Eukaryota</taxon>
        <taxon>Fungi</taxon>
        <taxon>Dikarya</taxon>
        <taxon>Ascomycota</taxon>
        <taxon>Saccharomycotina</taxon>
        <taxon>Saccharomycetes</taxon>
        <taxon>Saccharomycetales</taxon>
        <taxon>Saccharomycetaceae</taxon>
        <taxon>Saccharomyces</taxon>
    </lineage>
</organism>
<comment type="function">
    <text evidence="3">Involved in the nuclear retention of improperly spliced pre-mRNAs.</text>
</comment>
<comment type="subunit">
    <text evidence="3">Interacts with MLP1 and MLP2.</text>
</comment>
<comment type="subcellular location">
    <subcellularLocation>
        <location evidence="1 3">Nucleus membrane</location>
        <topology evidence="1 3">Peripheral membrane protein</topology>
        <orientation evidence="1 3">Lumenal side</orientation>
    </subcellularLocation>
    <text>Associated with a subset of nuclear pores opposite to the nucleolus.</text>
</comment>
<comment type="miscellaneous">
    <text evidence="2">Present with 2205 molecules/cell in log phase SD medium.</text>
</comment>
<comment type="sequence caution" evidence="4">
    <conflict type="erroneous initiation">
        <sequence resource="EMBL-CDS" id="CAA89111"/>
    </conflict>
</comment>
<name>PML39_YEAST</name>
<gene>
    <name type="primary">PML39</name>
    <name type="ordered locus">YML107C</name>
    <name type="ORF">YM8339.12</name>
</gene>
<accession>Q03760</accession>
<accession>D6W0H7</accession>
<evidence type="ECO:0000269" key="1">
    <source>
    </source>
</evidence>
<evidence type="ECO:0000269" key="2">
    <source>
    </source>
</evidence>
<evidence type="ECO:0000269" key="3">
    <source>
    </source>
</evidence>
<evidence type="ECO:0000305" key="4"/>
<evidence type="ECO:0007829" key="5">
    <source>
        <dbReference type="PDB" id="7RDN"/>
    </source>
</evidence>
<reference key="1">
    <citation type="journal article" date="1997" name="Nature">
        <title>The nucleotide sequence of Saccharomyces cerevisiae chromosome XIII.</title>
        <authorList>
            <person name="Bowman S."/>
            <person name="Churcher C.M."/>
            <person name="Badcock K."/>
            <person name="Brown D."/>
            <person name="Chillingworth T."/>
            <person name="Connor R."/>
            <person name="Dedman K."/>
            <person name="Devlin K."/>
            <person name="Gentles S."/>
            <person name="Hamlin N."/>
            <person name="Hunt S."/>
            <person name="Jagels K."/>
            <person name="Lye G."/>
            <person name="Moule S."/>
            <person name="Odell C."/>
            <person name="Pearson D."/>
            <person name="Rajandream M.A."/>
            <person name="Rice P."/>
            <person name="Skelton J."/>
            <person name="Walsh S.V."/>
            <person name="Whitehead S."/>
            <person name="Barrell B.G."/>
        </authorList>
    </citation>
    <scope>NUCLEOTIDE SEQUENCE [LARGE SCALE GENOMIC DNA]</scope>
    <source>
        <strain>ATCC 204508 / S288c</strain>
    </source>
</reference>
<reference key="2">
    <citation type="journal article" date="2014" name="G3 (Bethesda)">
        <title>The reference genome sequence of Saccharomyces cerevisiae: Then and now.</title>
        <authorList>
            <person name="Engel S.R."/>
            <person name="Dietrich F.S."/>
            <person name="Fisk D.G."/>
            <person name="Binkley G."/>
            <person name="Balakrishnan R."/>
            <person name="Costanzo M.C."/>
            <person name="Dwight S.S."/>
            <person name="Hitz B.C."/>
            <person name="Karra K."/>
            <person name="Nash R.S."/>
            <person name="Weng S."/>
            <person name="Wong E.D."/>
            <person name="Lloyd P."/>
            <person name="Skrzypek M.S."/>
            <person name="Miyasato S.R."/>
            <person name="Simison M."/>
            <person name="Cherry J.M."/>
        </authorList>
    </citation>
    <scope>GENOME REANNOTATION</scope>
    <source>
        <strain>ATCC 204508 / S288c</strain>
    </source>
</reference>
<reference key="3">
    <citation type="journal article" date="2003" name="Nature">
        <title>Sequencing and comparison of yeast species to identify genes and regulatory elements.</title>
        <authorList>
            <person name="Kellis M."/>
            <person name="Patterson N."/>
            <person name="Endrizzi M."/>
            <person name="Birren B.W."/>
            <person name="Lander E.S."/>
        </authorList>
    </citation>
    <scope>IDENTIFICATION OF PROBABLE INITIATION SITE</scope>
</reference>
<reference key="4">
    <citation type="journal article" date="2003" name="Nature">
        <title>Global analysis of protein localization in budding yeast.</title>
        <authorList>
            <person name="Huh W.-K."/>
            <person name="Falvo J.V."/>
            <person name="Gerke L.C."/>
            <person name="Carroll A.S."/>
            <person name="Howson R.W."/>
            <person name="Weissman J.S."/>
            <person name="O'Shea E.K."/>
        </authorList>
    </citation>
    <scope>SUBCELLULAR LOCATION [LARGE SCALE ANALYSIS]</scope>
</reference>
<reference key="5">
    <citation type="journal article" date="2003" name="Nature">
        <title>Global analysis of protein expression in yeast.</title>
        <authorList>
            <person name="Ghaemmaghami S."/>
            <person name="Huh W.-K."/>
            <person name="Bower K."/>
            <person name="Howson R.W."/>
            <person name="Belle A."/>
            <person name="Dephoure N."/>
            <person name="O'Shea E.K."/>
            <person name="Weissman J.S."/>
        </authorList>
    </citation>
    <scope>LEVEL OF PROTEIN EXPRESSION [LARGE SCALE ANALYSIS]</scope>
</reference>
<reference key="6">
    <citation type="journal article" date="2005" name="Mol. Biol. Cell">
        <title>Pml39, a novel protein of the nuclear periphery required for nuclear retention of improper messenger ribonucleoparticles.</title>
        <authorList>
            <person name="Palancade B."/>
            <person name="Zuccolo M."/>
            <person name="Loeillet S."/>
            <person name="Nicolas A."/>
            <person name="Doye V."/>
        </authorList>
    </citation>
    <scope>FUNCTION</scope>
    <scope>SUBCELLULAR LOCATION</scope>
    <scope>INTERACTION WITH MLP1 AND MLP2</scope>
</reference>
<protein>
    <recommendedName>
        <fullName>Pre-mRNA leakage protein 39</fullName>
    </recommendedName>
    <alternativeName>
        <fullName>39 kDa pre-mRNA leakage protein</fullName>
    </alternativeName>
</protein>
<feature type="chain" id="PRO_0000203243" description="Pre-mRNA leakage protein 39">
    <location>
        <begin position="1"/>
        <end position="334"/>
    </location>
</feature>
<feature type="helix" evidence="5">
    <location>
        <begin position="83"/>
        <end position="97"/>
    </location>
</feature>
<feature type="strand" evidence="5">
    <location>
        <begin position="106"/>
        <end position="110"/>
    </location>
</feature>
<feature type="helix" evidence="5">
    <location>
        <begin position="111"/>
        <end position="116"/>
    </location>
</feature>
<feature type="strand" evidence="5">
    <location>
        <begin position="119"/>
        <end position="121"/>
    </location>
</feature>
<feature type="strand" evidence="5">
    <location>
        <begin position="127"/>
        <end position="134"/>
    </location>
</feature>
<feature type="turn" evidence="5">
    <location>
        <begin position="135"/>
        <end position="137"/>
    </location>
</feature>
<feature type="strand" evidence="5">
    <location>
        <begin position="140"/>
        <end position="144"/>
    </location>
</feature>
<feature type="helix" evidence="5">
    <location>
        <begin position="156"/>
        <end position="166"/>
    </location>
</feature>
<feature type="turn" evidence="5">
    <location>
        <begin position="167"/>
        <end position="171"/>
    </location>
</feature>
<feature type="turn" evidence="5">
    <location>
        <begin position="177"/>
        <end position="180"/>
    </location>
</feature>
<feature type="helix" evidence="5">
    <location>
        <begin position="185"/>
        <end position="188"/>
    </location>
</feature>
<feature type="turn" evidence="5">
    <location>
        <begin position="193"/>
        <end position="195"/>
    </location>
</feature>
<feature type="helix" evidence="5">
    <location>
        <begin position="196"/>
        <end position="211"/>
    </location>
</feature>
<feature type="helix" evidence="5">
    <location>
        <begin position="232"/>
        <end position="241"/>
    </location>
</feature>
<feature type="helix" evidence="5">
    <location>
        <begin position="247"/>
        <end position="254"/>
    </location>
</feature>
<feature type="strand" evidence="5">
    <location>
        <begin position="257"/>
        <end position="259"/>
    </location>
</feature>
<feature type="strand" evidence="5">
    <location>
        <begin position="261"/>
        <end position="271"/>
    </location>
</feature>
<feature type="strand" evidence="5">
    <location>
        <begin position="274"/>
        <end position="276"/>
    </location>
</feature>
<feature type="helix" evidence="5">
    <location>
        <begin position="277"/>
        <end position="280"/>
    </location>
</feature>
<feature type="helix" evidence="5">
    <location>
        <begin position="299"/>
        <end position="309"/>
    </location>
</feature>
<keyword id="KW-0002">3D-structure</keyword>
<keyword id="KW-0472">Membrane</keyword>
<keyword id="KW-0509">mRNA transport</keyword>
<keyword id="KW-0539">Nucleus</keyword>
<keyword id="KW-1185">Reference proteome</keyword>
<keyword id="KW-0813">Transport</keyword>
<proteinExistence type="evidence at protein level"/>